<gene>
    <name evidence="1" type="primary">purM</name>
</gene>
<keyword id="KW-0067">ATP-binding</keyword>
<keyword id="KW-0963">Cytoplasm</keyword>
<keyword id="KW-0436">Ligase</keyword>
<keyword id="KW-0547">Nucleotide-binding</keyword>
<keyword id="KW-0658">Purine biosynthesis</keyword>
<name>PUR5_RHILE</name>
<reference key="1">
    <citation type="journal article" date="2000" name="Mol. Plant Microbe Interact.">
        <title>The purMN genes of Rhizobium leguminosarum and a superficial link with siderophore production.</title>
        <authorList>
            <person name="Stevens J.B."/>
            <person name="De Luca N.G."/>
            <person name="Beringer J.E."/>
            <person name="Ringer J.P."/>
            <person name="Yeoman K.H."/>
            <person name="Johnston A.W.B."/>
        </authorList>
    </citation>
    <scope>NUCLEOTIDE SEQUENCE [GENOMIC DNA]</scope>
</reference>
<sequence>MSQSGKNGLTYSDAGVDIDAGNLLVEKIKPAVRSTRRPGGDGEIGGFGGLFDLKAAAFTDPVLVAANDGVGTKLKIAIDADYHDTVGIDLVAMCVNDLVVQGAEPLFFLDYFATGKLDPDQGAAIVGGIAARCREAGCALIGGETAEMPGMYSSGDYDLAGFAVGAAERGKLLPSGDIAEGDVILGLASSGVHSNGFSLVRKIVELSGLDWSAAAPFAERRLLGEALLEPTRIYVKPLLKAIRETGAIKALAHITGGGFPENIPRVLPKHLAAEIDLDAVKVPPVFSWLAKTGGVESREMLRTFNCGVGMIAVVAAENVAAVSEALEAEGETVITLGRMIVRDEGAAGTVYKGTLAI</sequence>
<proteinExistence type="inferred from homology"/>
<dbReference type="EC" id="6.3.3.1" evidence="1"/>
<dbReference type="EMBL" id="AJ243305">
    <property type="protein sequence ID" value="CAB46525.1"/>
    <property type="molecule type" value="Genomic_DNA"/>
</dbReference>
<dbReference type="SMR" id="Q9XAT2"/>
<dbReference type="eggNOG" id="COG0150">
    <property type="taxonomic scope" value="Bacteria"/>
</dbReference>
<dbReference type="UniPathway" id="UPA00074">
    <property type="reaction ID" value="UER00129"/>
</dbReference>
<dbReference type="GO" id="GO:0005829">
    <property type="term" value="C:cytosol"/>
    <property type="evidence" value="ECO:0007669"/>
    <property type="project" value="TreeGrafter"/>
</dbReference>
<dbReference type="GO" id="GO:0005524">
    <property type="term" value="F:ATP binding"/>
    <property type="evidence" value="ECO:0007669"/>
    <property type="project" value="UniProtKB-KW"/>
</dbReference>
<dbReference type="GO" id="GO:0004637">
    <property type="term" value="F:phosphoribosylamine-glycine ligase activity"/>
    <property type="evidence" value="ECO:0007669"/>
    <property type="project" value="TreeGrafter"/>
</dbReference>
<dbReference type="GO" id="GO:0004641">
    <property type="term" value="F:phosphoribosylformylglycinamidine cyclo-ligase activity"/>
    <property type="evidence" value="ECO:0007669"/>
    <property type="project" value="UniProtKB-UniRule"/>
</dbReference>
<dbReference type="GO" id="GO:0006189">
    <property type="term" value="P:'de novo' IMP biosynthetic process"/>
    <property type="evidence" value="ECO:0007669"/>
    <property type="project" value="UniProtKB-UniRule"/>
</dbReference>
<dbReference type="GO" id="GO:0046084">
    <property type="term" value="P:adenine biosynthetic process"/>
    <property type="evidence" value="ECO:0007669"/>
    <property type="project" value="TreeGrafter"/>
</dbReference>
<dbReference type="CDD" id="cd02196">
    <property type="entry name" value="PurM"/>
    <property type="match status" value="1"/>
</dbReference>
<dbReference type="FunFam" id="3.30.1330.10:FF:000001">
    <property type="entry name" value="Phosphoribosylformylglycinamidine cyclo-ligase"/>
    <property type="match status" value="1"/>
</dbReference>
<dbReference type="FunFam" id="3.90.650.10:FF:000007">
    <property type="entry name" value="Trifunctional purine biosynthetic protein adenosine-3"/>
    <property type="match status" value="1"/>
</dbReference>
<dbReference type="Gene3D" id="3.90.650.10">
    <property type="entry name" value="PurM-like C-terminal domain"/>
    <property type="match status" value="1"/>
</dbReference>
<dbReference type="Gene3D" id="3.30.1330.10">
    <property type="entry name" value="PurM-like, N-terminal domain"/>
    <property type="match status" value="1"/>
</dbReference>
<dbReference type="HAMAP" id="MF_00741">
    <property type="entry name" value="AIRS"/>
    <property type="match status" value="1"/>
</dbReference>
<dbReference type="InterPro" id="IPR010918">
    <property type="entry name" value="PurM-like_C_dom"/>
</dbReference>
<dbReference type="InterPro" id="IPR036676">
    <property type="entry name" value="PurM-like_C_sf"/>
</dbReference>
<dbReference type="InterPro" id="IPR016188">
    <property type="entry name" value="PurM-like_N"/>
</dbReference>
<dbReference type="InterPro" id="IPR036921">
    <property type="entry name" value="PurM-like_N_sf"/>
</dbReference>
<dbReference type="InterPro" id="IPR004733">
    <property type="entry name" value="PurM_cligase"/>
</dbReference>
<dbReference type="NCBIfam" id="TIGR00878">
    <property type="entry name" value="purM"/>
    <property type="match status" value="1"/>
</dbReference>
<dbReference type="PANTHER" id="PTHR10520:SF12">
    <property type="entry name" value="TRIFUNCTIONAL PURINE BIOSYNTHETIC PROTEIN ADENOSINE-3"/>
    <property type="match status" value="1"/>
</dbReference>
<dbReference type="PANTHER" id="PTHR10520">
    <property type="entry name" value="TRIFUNCTIONAL PURINE BIOSYNTHETIC PROTEIN ADENOSINE-3-RELATED"/>
    <property type="match status" value="1"/>
</dbReference>
<dbReference type="Pfam" id="PF00586">
    <property type="entry name" value="AIRS"/>
    <property type="match status" value="1"/>
</dbReference>
<dbReference type="Pfam" id="PF02769">
    <property type="entry name" value="AIRS_C"/>
    <property type="match status" value="1"/>
</dbReference>
<dbReference type="SUPFAM" id="SSF56042">
    <property type="entry name" value="PurM C-terminal domain-like"/>
    <property type="match status" value="1"/>
</dbReference>
<dbReference type="SUPFAM" id="SSF55326">
    <property type="entry name" value="PurM N-terminal domain-like"/>
    <property type="match status" value="1"/>
</dbReference>
<feature type="chain" id="PRO_0000148237" description="Phosphoribosylformylglycinamidine cyclo-ligase">
    <location>
        <begin position="1"/>
        <end position="357"/>
    </location>
</feature>
<protein>
    <recommendedName>
        <fullName evidence="1">Phosphoribosylformylglycinamidine cyclo-ligase</fullName>
        <ecNumber evidence="1">6.3.3.1</ecNumber>
    </recommendedName>
    <alternativeName>
        <fullName evidence="1">AIR synthase</fullName>
    </alternativeName>
    <alternativeName>
        <fullName evidence="1">AIRS</fullName>
    </alternativeName>
    <alternativeName>
        <fullName evidence="1">Phosphoribosyl-aminoimidazole synthetase</fullName>
    </alternativeName>
</protein>
<organism>
    <name type="scientific">Rhizobium leguminosarum</name>
    <dbReference type="NCBI Taxonomy" id="384"/>
    <lineage>
        <taxon>Bacteria</taxon>
        <taxon>Pseudomonadati</taxon>
        <taxon>Pseudomonadota</taxon>
        <taxon>Alphaproteobacteria</taxon>
        <taxon>Hyphomicrobiales</taxon>
        <taxon>Rhizobiaceae</taxon>
        <taxon>Rhizobium/Agrobacterium group</taxon>
        <taxon>Rhizobium</taxon>
    </lineage>
</organism>
<comment type="catalytic activity">
    <reaction evidence="1">
        <text>2-formamido-N(1)-(5-O-phospho-beta-D-ribosyl)acetamidine + ATP = 5-amino-1-(5-phospho-beta-D-ribosyl)imidazole + ADP + phosphate + H(+)</text>
        <dbReference type="Rhea" id="RHEA:23032"/>
        <dbReference type="ChEBI" id="CHEBI:15378"/>
        <dbReference type="ChEBI" id="CHEBI:30616"/>
        <dbReference type="ChEBI" id="CHEBI:43474"/>
        <dbReference type="ChEBI" id="CHEBI:137981"/>
        <dbReference type="ChEBI" id="CHEBI:147287"/>
        <dbReference type="ChEBI" id="CHEBI:456216"/>
        <dbReference type="EC" id="6.3.3.1"/>
    </reaction>
</comment>
<comment type="pathway">
    <text evidence="1">Purine metabolism; IMP biosynthesis via de novo pathway; 5-amino-1-(5-phospho-D-ribosyl)imidazole from N(2)-formyl-N(1)-(5-phospho-D-ribosyl)glycinamide: step 2/2.</text>
</comment>
<comment type="subcellular location">
    <subcellularLocation>
        <location evidence="1">Cytoplasm</location>
    </subcellularLocation>
</comment>
<comment type="similarity">
    <text evidence="1">Belongs to the AIR synthase family.</text>
</comment>
<evidence type="ECO:0000255" key="1">
    <source>
        <dbReference type="HAMAP-Rule" id="MF_00741"/>
    </source>
</evidence>
<accession>Q9XAT2</accession>